<evidence type="ECO:0000255" key="1">
    <source>
        <dbReference type="HAMAP-Rule" id="MF_00909"/>
    </source>
</evidence>
<evidence type="ECO:0000256" key="2">
    <source>
        <dbReference type="SAM" id="MobiDB-lite"/>
    </source>
</evidence>
<reference key="1">
    <citation type="journal article" date="1997" name="J. Bacteriol.">
        <title>The 75-kilodalton antigen of Bartonella bacilliformis is a structural homolog of the cell division protein ftsZ.</title>
        <authorList>
            <person name="Padmalayam I."/>
            <person name="Anderson B."/>
            <person name="Kron M."/>
            <person name="Kelly T."/>
            <person name="Baumstark B."/>
        </authorList>
    </citation>
    <scope>NUCLEOTIDE SEQUENCE [GENOMIC DNA]</scope>
    <source>
        <strain>ATCC 35686 / KC584 / NCTC 12139</strain>
    </source>
</reference>
<reference key="2">
    <citation type="submission" date="1998-04" db="EMBL/GenBank/DDBJ databases">
        <authorList>
            <person name="Kelly T."/>
        </authorList>
    </citation>
    <scope>SEQUENCE REVISION</scope>
</reference>
<name>FTSZ_BARBA</name>
<dbReference type="EMBL" id="AY599560">
    <property type="protein sequence ID" value="AAT38536.1"/>
    <property type="molecule type" value="Genomic_DNA"/>
</dbReference>
<dbReference type="RefSeq" id="WP_005767417.1">
    <property type="nucleotide sequence ID" value="NZ_LQWW01000013.1"/>
</dbReference>
<dbReference type="SMR" id="O31314"/>
<dbReference type="GeneID" id="4684833"/>
<dbReference type="OMA" id="MTINLHR"/>
<dbReference type="GO" id="GO:0032153">
    <property type="term" value="C:cell division site"/>
    <property type="evidence" value="ECO:0007669"/>
    <property type="project" value="UniProtKB-UniRule"/>
</dbReference>
<dbReference type="GO" id="GO:0005737">
    <property type="term" value="C:cytoplasm"/>
    <property type="evidence" value="ECO:0007669"/>
    <property type="project" value="UniProtKB-SubCell"/>
</dbReference>
<dbReference type="GO" id="GO:0005525">
    <property type="term" value="F:GTP binding"/>
    <property type="evidence" value="ECO:0007669"/>
    <property type="project" value="UniProtKB-UniRule"/>
</dbReference>
<dbReference type="GO" id="GO:0003924">
    <property type="term" value="F:GTPase activity"/>
    <property type="evidence" value="ECO:0007669"/>
    <property type="project" value="UniProtKB-UniRule"/>
</dbReference>
<dbReference type="GO" id="GO:0000917">
    <property type="term" value="P:division septum assembly"/>
    <property type="evidence" value="ECO:0007669"/>
    <property type="project" value="UniProtKB-KW"/>
</dbReference>
<dbReference type="GO" id="GO:0043093">
    <property type="term" value="P:FtsZ-dependent cytokinesis"/>
    <property type="evidence" value="ECO:0007669"/>
    <property type="project" value="UniProtKB-UniRule"/>
</dbReference>
<dbReference type="GO" id="GO:0051258">
    <property type="term" value="P:protein polymerization"/>
    <property type="evidence" value="ECO:0007669"/>
    <property type="project" value="UniProtKB-UniRule"/>
</dbReference>
<dbReference type="CDD" id="cd02201">
    <property type="entry name" value="FtsZ_type1"/>
    <property type="match status" value="1"/>
</dbReference>
<dbReference type="FunFam" id="3.30.1330.20:FF:000011">
    <property type="entry name" value="Cell division protein FtsZ"/>
    <property type="match status" value="1"/>
</dbReference>
<dbReference type="FunFam" id="3.40.50.1440:FF:000001">
    <property type="entry name" value="Cell division protein FtsZ"/>
    <property type="match status" value="1"/>
</dbReference>
<dbReference type="Gene3D" id="3.30.1330.20">
    <property type="entry name" value="Tubulin/FtsZ, C-terminal domain"/>
    <property type="match status" value="1"/>
</dbReference>
<dbReference type="Gene3D" id="3.40.50.1440">
    <property type="entry name" value="Tubulin/FtsZ, GTPase domain"/>
    <property type="match status" value="1"/>
</dbReference>
<dbReference type="HAMAP" id="MF_00909">
    <property type="entry name" value="FtsZ"/>
    <property type="match status" value="1"/>
</dbReference>
<dbReference type="InterPro" id="IPR000158">
    <property type="entry name" value="Cell_div_FtsZ"/>
</dbReference>
<dbReference type="InterPro" id="IPR017844">
    <property type="entry name" value="Cell_div_FtsZ_C"/>
</dbReference>
<dbReference type="InterPro" id="IPR020805">
    <property type="entry name" value="Cell_div_FtsZ_CS"/>
</dbReference>
<dbReference type="InterPro" id="IPR045061">
    <property type="entry name" value="FtsZ/CetZ"/>
</dbReference>
<dbReference type="InterPro" id="IPR024757">
    <property type="entry name" value="FtsZ_C"/>
</dbReference>
<dbReference type="InterPro" id="IPR008280">
    <property type="entry name" value="Tub_FtsZ_C"/>
</dbReference>
<dbReference type="InterPro" id="IPR037103">
    <property type="entry name" value="Tubulin/FtsZ-like_C"/>
</dbReference>
<dbReference type="InterPro" id="IPR018316">
    <property type="entry name" value="Tubulin/FtsZ_2-layer-sand-dom"/>
</dbReference>
<dbReference type="InterPro" id="IPR036525">
    <property type="entry name" value="Tubulin/FtsZ_GTPase_sf"/>
</dbReference>
<dbReference type="InterPro" id="IPR003008">
    <property type="entry name" value="Tubulin_FtsZ_GTPase"/>
</dbReference>
<dbReference type="NCBIfam" id="TIGR00065">
    <property type="entry name" value="ftsZ"/>
    <property type="match status" value="1"/>
</dbReference>
<dbReference type="NCBIfam" id="TIGR03483">
    <property type="entry name" value="FtsZ_alphas_C"/>
    <property type="match status" value="1"/>
</dbReference>
<dbReference type="PANTHER" id="PTHR30314">
    <property type="entry name" value="CELL DIVISION PROTEIN FTSZ-RELATED"/>
    <property type="match status" value="1"/>
</dbReference>
<dbReference type="PANTHER" id="PTHR30314:SF3">
    <property type="entry name" value="MITOCHONDRIAL DIVISION PROTEIN FSZA"/>
    <property type="match status" value="1"/>
</dbReference>
<dbReference type="Pfam" id="PF12327">
    <property type="entry name" value="FtsZ_C"/>
    <property type="match status" value="1"/>
</dbReference>
<dbReference type="Pfam" id="PF00091">
    <property type="entry name" value="Tubulin"/>
    <property type="match status" value="1"/>
</dbReference>
<dbReference type="PRINTS" id="PR00423">
    <property type="entry name" value="CELLDVISFTSZ"/>
</dbReference>
<dbReference type="SMART" id="SM00864">
    <property type="entry name" value="Tubulin"/>
    <property type="match status" value="1"/>
</dbReference>
<dbReference type="SMART" id="SM00865">
    <property type="entry name" value="Tubulin_C"/>
    <property type="match status" value="1"/>
</dbReference>
<dbReference type="SUPFAM" id="SSF55307">
    <property type="entry name" value="Tubulin C-terminal domain-like"/>
    <property type="match status" value="1"/>
</dbReference>
<dbReference type="SUPFAM" id="SSF52490">
    <property type="entry name" value="Tubulin nucleotide-binding domain-like"/>
    <property type="match status" value="1"/>
</dbReference>
<dbReference type="PROSITE" id="PS01134">
    <property type="entry name" value="FTSZ_1"/>
    <property type="match status" value="1"/>
</dbReference>
<dbReference type="PROSITE" id="PS01135">
    <property type="entry name" value="FTSZ_2"/>
    <property type="match status" value="1"/>
</dbReference>
<accession>O31314</accession>
<sequence>MTINLHRPDIAELKPRITVFGVGGGGGNAVNNMINAGLQGVDFVVANTDAQALAMSKAERVIQLGAAVTEGLGAGALPEVGQAAADECIDEIIDHLADSHMVFITAGMGGGTGTGAAPVVARAAREKGILTVGVVTKPFQFEGARRMKTAEAGIEELQKSVDTLIVIPNQNLFRIANEKTTFADAFAMADQVLYSGVASITDLMIKEGLINLDFADVRSVMHEMGRAMMGTGEASGEGRALAAAEAAIANPLLDETSMCGARGLLISITGGRDMTLFEVDEAANRIREEVDADANVIFGAIDDESLEGVIRVSVVATGIDRLASDVVQPSHSKFQKSVSSVRKNDSGINQTASHPQSSQLRSESMVETIESLEVEVSQSQPVEEMFSPKSQIFAKPTDTASTSSRSAATYPFGHGQSDIYGKISNASRIQVNSIPQQSTAAAVSMEATAHVLSEMTNIVEQSEEKQAQIQPYIAPARMPELKDFSPFTHGQGIHSSGLEQGPRSLWQRLKQSLTYREEIEPEARLEPAVKPLQNEESHIYNKNVQKVSSQDSSVYAPHRSTKLQSRALQDQRAFVNEEDQLEIPAFLRRQAN</sequence>
<feature type="chain" id="PRO_0000114342" description="Cell division protein FtsZ">
    <location>
        <begin position="1"/>
        <end position="592"/>
    </location>
</feature>
<feature type="region of interest" description="Disordered" evidence="2">
    <location>
        <begin position="333"/>
        <end position="362"/>
    </location>
</feature>
<feature type="binding site" evidence="1">
    <location>
        <begin position="24"/>
        <end position="28"/>
    </location>
    <ligand>
        <name>GTP</name>
        <dbReference type="ChEBI" id="CHEBI:37565"/>
    </ligand>
</feature>
<feature type="binding site" evidence="1">
    <location>
        <begin position="111"/>
        <end position="113"/>
    </location>
    <ligand>
        <name>GTP</name>
        <dbReference type="ChEBI" id="CHEBI:37565"/>
    </ligand>
</feature>
<feature type="binding site" evidence="1">
    <location>
        <position position="142"/>
    </location>
    <ligand>
        <name>GTP</name>
        <dbReference type="ChEBI" id="CHEBI:37565"/>
    </ligand>
</feature>
<feature type="binding site" evidence="1">
    <location>
        <position position="146"/>
    </location>
    <ligand>
        <name>GTP</name>
        <dbReference type="ChEBI" id="CHEBI:37565"/>
    </ligand>
</feature>
<feature type="binding site" evidence="1">
    <location>
        <position position="190"/>
    </location>
    <ligand>
        <name>GTP</name>
        <dbReference type="ChEBI" id="CHEBI:37565"/>
    </ligand>
</feature>
<protein>
    <recommendedName>
        <fullName evidence="1">Cell division protein FtsZ</fullName>
    </recommendedName>
    <alternativeName>
        <fullName>75 kDa antigen</fullName>
    </alternativeName>
</protein>
<proteinExistence type="inferred from homology"/>
<comment type="function">
    <text evidence="1">Essential cell division protein that forms a contractile ring structure (Z ring) at the future cell division site. The regulation of the ring assembly controls the timing and the location of cell division. One of the functions of the FtsZ ring is to recruit other cell division proteins to the septum to produce a new cell wall between the dividing cells. Binds GTP and shows GTPase activity.</text>
</comment>
<comment type="subunit">
    <text evidence="1">Homodimer. Polymerizes to form a dynamic ring structure in a strictly GTP-dependent manner. Interacts directly with several other division proteins.</text>
</comment>
<comment type="subcellular location">
    <subcellularLocation>
        <location evidence="1">Cytoplasm</location>
    </subcellularLocation>
    <text evidence="1">Assembles at midcell at the inner surface of the cytoplasmic membrane.</text>
</comment>
<comment type="similarity">
    <text evidence="1">Belongs to the FtsZ family.</text>
</comment>
<organism>
    <name type="scientific">Bartonella bacilliformis</name>
    <dbReference type="NCBI Taxonomy" id="774"/>
    <lineage>
        <taxon>Bacteria</taxon>
        <taxon>Pseudomonadati</taxon>
        <taxon>Pseudomonadota</taxon>
        <taxon>Alphaproteobacteria</taxon>
        <taxon>Hyphomicrobiales</taxon>
        <taxon>Bartonellaceae</taxon>
        <taxon>Bartonella</taxon>
    </lineage>
</organism>
<keyword id="KW-0131">Cell cycle</keyword>
<keyword id="KW-0132">Cell division</keyword>
<keyword id="KW-0963">Cytoplasm</keyword>
<keyword id="KW-0342">GTP-binding</keyword>
<keyword id="KW-0547">Nucleotide-binding</keyword>
<keyword id="KW-0717">Septation</keyword>
<gene>
    <name evidence="1" type="primary">ftsZ</name>
</gene>